<comment type="function">
    <text evidence="3">Catalyzes the sequential condensation of isopentenyl pyrophosphate with the allylic pyrophosphates, dimethylallyl pyrophosphate, and then with the resultant geranylpyrophosphate to the ultimate product farnesyl pyrophosphate.</text>
</comment>
<comment type="catalytic activity">
    <reaction evidence="3">
        <text>isopentenyl diphosphate + dimethylallyl diphosphate = (2E)-geranyl diphosphate + diphosphate</text>
        <dbReference type="Rhea" id="RHEA:22408"/>
        <dbReference type="ChEBI" id="CHEBI:33019"/>
        <dbReference type="ChEBI" id="CHEBI:57623"/>
        <dbReference type="ChEBI" id="CHEBI:58057"/>
        <dbReference type="ChEBI" id="CHEBI:128769"/>
        <dbReference type="EC" id="2.5.1.1"/>
    </reaction>
    <physiologicalReaction direction="left-to-right" evidence="3">
        <dbReference type="Rhea" id="RHEA:22409"/>
    </physiologicalReaction>
</comment>
<comment type="catalytic activity">
    <reaction evidence="3">
        <text>isopentenyl diphosphate + (2E)-geranyl diphosphate = (2E,6E)-farnesyl diphosphate + diphosphate</text>
        <dbReference type="Rhea" id="RHEA:19361"/>
        <dbReference type="ChEBI" id="CHEBI:33019"/>
        <dbReference type="ChEBI" id="CHEBI:58057"/>
        <dbReference type="ChEBI" id="CHEBI:128769"/>
        <dbReference type="ChEBI" id="CHEBI:175763"/>
        <dbReference type="EC" id="2.5.1.10"/>
    </reaction>
    <physiologicalReaction direction="left-to-right" evidence="3">
        <dbReference type="Rhea" id="RHEA:19362"/>
    </physiologicalReaction>
</comment>
<comment type="cofactor">
    <cofactor evidence="4">
        <name>Mg(2+)</name>
        <dbReference type="ChEBI" id="CHEBI:18420"/>
    </cofactor>
    <text evidence="4">Binds 2 Mg(2+) ions per subunit.</text>
</comment>
<comment type="pathway">
    <text evidence="3">Isoprenoid biosynthesis; farnesyl diphosphate biosynthesis; farnesyl diphosphate from geranyl diphosphate and isopentenyl diphosphate: step 1/1.</text>
</comment>
<comment type="pathway">
    <text evidence="3">Sesquiterpene biosynthesis.</text>
</comment>
<comment type="pathway">
    <text evidence="3">Isoprenoid biosynthesis; geranyl diphosphate biosynthesis; geranyl diphosphate from dimethylallyl diphosphate and isopentenyl diphosphate: step 1/1.</text>
</comment>
<comment type="subcellular location">
    <subcellularLocation>
        <location evidence="1">Cytoplasm</location>
    </subcellularLocation>
    <subcellularLocation>
        <location evidence="1">Nucleus</location>
    </subcellularLocation>
</comment>
<comment type="tissue specificity">
    <text evidence="5">Mainly expressed in trichomes and flowers, and, to a lower extent, in leaves, roots and stems.</text>
</comment>
<comment type="similarity">
    <text evidence="7">Belongs to the FPP/GGPP synthase family.</text>
</comment>
<comment type="sequence caution" evidence="7">
    <conflict type="erroneous initiation">
        <sequence resource="EMBL-CDS" id="ARE72267"/>
    </conflict>
    <text>Extended N-terminus.</text>
</comment>
<gene>
    <name evidence="6" type="primary">FPPS1</name>
    <name evidence="8" type="ORF">F8388_021429</name>
    <name evidence="9" type="ORF">G4B88_010567</name>
    <name evidence="10" type="ORF">G4B88_022528</name>
</gene>
<evidence type="ECO:0000250" key="1">
    <source>
        <dbReference type="UniProtKB" id="O14230"/>
    </source>
</evidence>
<evidence type="ECO:0000250" key="2">
    <source>
        <dbReference type="UniProtKB" id="P14324"/>
    </source>
</evidence>
<evidence type="ECO:0000250" key="3">
    <source>
        <dbReference type="UniProtKB" id="P49350"/>
    </source>
</evidence>
<evidence type="ECO:0000250" key="4">
    <source>
        <dbReference type="UniProtKB" id="Q12051"/>
    </source>
</evidence>
<evidence type="ECO:0000269" key="5">
    <source>
    </source>
</evidence>
<evidence type="ECO:0000303" key="6">
    <source>
    </source>
</evidence>
<evidence type="ECO:0000305" key="7"/>
<evidence type="ECO:0000312" key="8">
    <source>
        <dbReference type="EMBL" id="KAF4368817.1"/>
    </source>
</evidence>
<evidence type="ECO:0000312" key="9">
    <source>
        <dbReference type="EMBL" id="KAF4379173.1"/>
    </source>
</evidence>
<evidence type="ECO:0000312" key="10">
    <source>
        <dbReference type="EMBL" id="KAF4399445.1"/>
    </source>
</evidence>
<sequence>MADLKAKFLNVYSVLKSELLQDPAFEFTDISRQWVERMTDYNVPGGKLNRGLSVIDSYKLLKGEELTEEEIFLASALGWCIEWLQAYFLVLDDIMDNSHTRRGQPCWYKVPKVGMIAANDGVLLRNHIFRILKNHFKDKPYYVDLLDLFNEVEFQTASGQMLDLISSEGENDLSKFSLSLHRRIVQYKTAYYSFYLSVACALLMSGENLEDHVDVKNILVQMGIYFQVQDDYLDCFVDPKILGKIGTDIEDFKCSWLVVKALELSNEEQKKILNENYGKADPEKVAKVKALYKELDLEGEFADYESKSYEKLITSIESHPSKAVQAVLKSFLGKIYKRQK</sequence>
<accession>A0A7J6HWR9</accession>
<accession>A0A1V0QSH0</accession>
<accession>A0A7J6G880</accession>
<accession>A0A803NYK3</accession>
<dbReference type="EC" id="2.5.1.10" evidence="3"/>
<dbReference type="EC" id="2.5.1.1" evidence="3"/>
<dbReference type="EMBL" id="KY014571">
    <property type="protein sequence ID" value="ARE72267.1"/>
    <property type="status" value="ALT_INIT"/>
    <property type="molecule type" value="mRNA"/>
</dbReference>
<dbReference type="EMBL" id="JAATIP010000132">
    <property type="protein sequence ID" value="KAF4368817.1"/>
    <property type="molecule type" value="Genomic_DNA"/>
</dbReference>
<dbReference type="EMBL" id="JAATIQ010000021">
    <property type="protein sequence ID" value="KAF4399445.1"/>
    <property type="molecule type" value="Genomic_DNA"/>
</dbReference>
<dbReference type="EMBL" id="JAATIQ010000130">
    <property type="protein sequence ID" value="KAF4379173.1"/>
    <property type="molecule type" value="Genomic_DNA"/>
</dbReference>
<dbReference type="EMBL" id="UZAU01000235">
    <property type="status" value="NOT_ANNOTATED_CDS"/>
    <property type="molecule type" value="Genomic_DNA"/>
</dbReference>
<dbReference type="SMR" id="A0A7J6HWR9"/>
<dbReference type="EnsemblPlants" id="evm.model.02.2737">
    <property type="protein sequence ID" value="cds.evm.model.02.2737"/>
    <property type="gene ID" value="evm.TU.02.2737"/>
</dbReference>
<dbReference type="Gramene" id="evm.model.02.2737">
    <property type="protein sequence ID" value="cds.evm.model.02.2737"/>
    <property type="gene ID" value="evm.TU.02.2737"/>
</dbReference>
<dbReference type="OMA" id="CSWVVNQ"/>
<dbReference type="OrthoDB" id="10257492at2759"/>
<dbReference type="UniPathway" id="UPA00259">
    <property type="reaction ID" value="UER00368"/>
</dbReference>
<dbReference type="UniPathway" id="UPA00260">
    <property type="reaction ID" value="UER00369"/>
</dbReference>
<dbReference type="Proteomes" id="UP000525078">
    <property type="component" value="Unassembled WGS sequence"/>
</dbReference>
<dbReference type="Proteomes" id="UP000583929">
    <property type="component" value="Unassembled WGS sequence"/>
</dbReference>
<dbReference type="Proteomes" id="UP000596661">
    <property type="component" value="Chromosome 2"/>
</dbReference>
<dbReference type="GO" id="GO:0005737">
    <property type="term" value="C:cytoplasm"/>
    <property type="evidence" value="ECO:0007669"/>
    <property type="project" value="UniProtKB-SubCell"/>
</dbReference>
<dbReference type="GO" id="GO:0005634">
    <property type="term" value="C:nucleus"/>
    <property type="evidence" value="ECO:0007669"/>
    <property type="project" value="UniProtKB-SubCell"/>
</dbReference>
<dbReference type="GO" id="GO:0004337">
    <property type="term" value="F:(2E,6E)-farnesyl diphosphate synthase activity"/>
    <property type="evidence" value="ECO:0007669"/>
    <property type="project" value="TreeGrafter"/>
</dbReference>
<dbReference type="GO" id="GO:0004161">
    <property type="term" value="F:dimethylallyltranstransferase activity"/>
    <property type="evidence" value="ECO:0007669"/>
    <property type="project" value="TreeGrafter"/>
</dbReference>
<dbReference type="GO" id="GO:0046872">
    <property type="term" value="F:metal ion binding"/>
    <property type="evidence" value="ECO:0007669"/>
    <property type="project" value="UniProtKB-KW"/>
</dbReference>
<dbReference type="GO" id="GO:0006695">
    <property type="term" value="P:cholesterol biosynthetic process"/>
    <property type="evidence" value="ECO:0007669"/>
    <property type="project" value="UniProtKB-KW"/>
</dbReference>
<dbReference type="GO" id="GO:0045337">
    <property type="term" value="P:farnesyl diphosphate biosynthetic process"/>
    <property type="evidence" value="ECO:0007669"/>
    <property type="project" value="TreeGrafter"/>
</dbReference>
<dbReference type="CDD" id="cd00685">
    <property type="entry name" value="Trans_IPPS_HT"/>
    <property type="match status" value="1"/>
</dbReference>
<dbReference type="FunFam" id="1.10.600.10:FF:000008">
    <property type="entry name" value="Farnesyl pyrophosphate synthase"/>
    <property type="match status" value="1"/>
</dbReference>
<dbReference type="Gene3D" id="1.10.600.10">
    <property type="entry name" value="Farnesyl Diphosphate Synthase"/>
    <property type="match status" value="1"/>
</dbReference>
<dbReference type="InterPro" id="IPR039702">
    <property type="entry name" value="FPS1-like"/>
</dbReference>
<dbReference type="InterPro" id="IPR008949">
    <property type="entry name" value="Isoprenoid_synthase_dom_sf"/>
</dbReference>
<dbReference type="InterPro" id="IPR000092">
    <property type="entry name" value="Polyprenyl_synt"/>
</dbReference>
<dbReference type="InterPro" id="IPR033749">
    <property type="entry name" value="Polyprenyl_synt_CS"/>
</dbReference>
<dbReference type="PANTHER" id="PTHR11525:SF0">
    <property type="entry name" value="FARNESYL PYROPHOSPHATE SYNTHASE"/>
    <property type="match status" value="1"/>
</dbReference>
<dbReference type="PANTHER" id="PTHR11525">
    <property type="entry name" value="FARNESYL-PYROPHOSPHATE SYNTHETASE"/>
    <property type="match status" value="1"/>
</dbReference>
<dbReference type="Pfam" id="PF00348">
    <property type="entry name" value="polyprenyl_synt"/>
    <property type="match status" value="1"/>
</dbReference>
<dbReference type="SFLD" id="SFLDS00005">
    <property type="entry name" value="Isoprenoid_Synthase_Type_I"/>
    <property type="match status" value="1"/>
</dbReference>
<dbReference type="SFLD" id="SFLDG01017">
    <property type="entry name" value="Polyprenyl_Transferase_Like"/>
    <property type="match status" value="1"/>
</dbReference>
<dbReference type="SUPFAM" id="SSF48576">
    <property type="entry name" value="Terpenoid synthases"/>
    <property type="match status" value="1"/>
</dbReference>
<dbReference type="PROSITE" id="PS00723">
    <property type="entry name" value="POLYPRENYL_SYNTHASE_1"/>
    <property type="match status" value="1"/>
</dbReference>
<dbReference type="PROSITE" id="PS00444">
    <property type="entry name" value="POLYPRENYL_SYNTHASE_2"/>
    <property type="match status" value="1"/>
</dbReference>
<protein>
    <recommendedName>
        <fullName evidence="6">Farnesyl pyrophosphate synthase 1</fullName>
        <shortName evidence="6">CsFPPS1</shortName>
        <shortName evidence="6">FPP synthase 1</shortName>
        <ecNumber evidence="3">2.5.1.10</ecNumber>
    </recommendedName>
    <alternativeName>
        <fullName evidence="7">(2E,6E)-farnesyl diphosphate synthase</fullName>
    </alternativeName>
    <alternativeName>
        <fullName evidence="7">Dimethylallyltranstransferase</fullName>
        <ecNumber evidence="3">2.5.1.1</ecNumber>
    </alternativeName>
    <alternativeName>
        <fullName evidence="7">Farnesyl diphosphate synthase</fullName>
    </alternativeName>
    <alternativeName>
        <fullName evidence="7">Geranyltranstransferase</fullName>
    </alternativeName>
</protein>
<organism>
    <name type="scientific">Cannabis sativa</name>
    <name type="common">Hemp</name>
    <name type="synonym">Marijuana</name>
    <dbReference type="NCBI Taxonomy" id="3483"/>
    <lineage>
        <taxon>Eukaryota</taxon>
        <taxon>Viridiplantae</taxon>
        <taxon>Streptophyta</taxon>
        <taxon>Embryophyta</taxon>
        <taxon>Tracheophyta</taxon>
        <taxon>Spermatophyta</taxon>
        <taxon>Magnoliopsida</taxon>
        <taxon>eudicotyledons</taxon>
        <taxon>Gunneridae</taxon>
        <taxon>Pentapetalae</taxon>
        <taxon>rosids</taxon>
        <taxon>fabids</taxon>
        <taxon>Rosales</taxon>
        <taxon>Cannabaceae</taxon>
        <taxon>Cannabis</taxon>
    </lineage>
</organism>
<keyword id="KW-0152">Cholesterol biosynthesis</keyword>
<keyword id="KW-0153">Cholesterol metabolism</keyword>
<keyword id="KW-0963">Cytoplasm</keyword>
<keyword id="KW-0414">Isoprene biosynthesis</keyword>
<keyword id="KW-0444">Lipid biosynthesis</keyword>
<keyword id="KW-0443">Lipid metabolism</keyword>
<keyword id="KW-0460">Magnesium</keyword>
<keyword id="KW-0479">Metal-binding</keyword>
<keyword id="KW-0539">Nucleus</keyword>
<keyword id="KW-1185">Reference proteome</keyword>
<keyword id="KW-0752">Steroid biosynthesis</keyword>
<keyword id="KW-0753">Steroid metabolism</keyword>
<keyword id="KW-0756">Sterol biosynthesis</keyword>
<keyword id="KW-1207">Sterol metabolism</keyword>
<keyword id="KW-0808">Transferase</keyword>
<reference key="1">
    <citation type="journal article" date="2017" name="PLoS ONE">
        <title>Terpene synthases from Cannabis sativa.</title>
        <authorList>
            <person name="Booth J.K."/>
            <person name="Page J.E."/>
            <person name="Bohlmann J."/>
        </authorList>
    </citation>
    <scope>NUCLEOTIDE SEQUENCE [MRNA]</scope>
    <scope>TISSUE SPECIFICITY</scope>
    <source>
        <strain>cv. Finola</strain>
        <strain>cv. Purple Kush TPS13</strain>
    </source>
</reference>
<reference key="2">
    <citation type="submission" date="2020-03" db="EMBL/GenBank/DDBJ databases">
        <title>Sequence and annotation of 42 cannabis genomes reveals extensive copy number variation in cannabinoid synthesis and pathogen resistance genes.</title>
        <authorList>
            <person name="Mckernan K.J."/>
            <person name="Helbert Y."/>
            <person name="Kane L.T."/>
            <person name="Ebling H."/>
            <person name="Zhang L."/>
            <person name="Liu B."/>
            <person name="Eaton Z."/>
            <person name="Mclaughlin S."/>
            <person name="Kingan S."/>
            <person name="Baybayan P."/>
            <person name="Concepcion G."/>
            <person name="Jordan M."/>
            <person name="Riva A."/>
            <person name="Barbazuk W."/>
            <person name="Harkins T."/>
        </authorList>
    </citation>
    <scope>NUCLEOTIDE SEQUENCE [LARGE SCALE GENOMIC DNA]</scope>
    <source>
        <strain>cv. Jamaican Lion 4</strain>
        <tissue>Leaf</tissue>
    </source>
</reference>
<feature type="chain" id="PRO_0000460892" description="Farnesyl pyrophosphate synthase 1">
    <location>
        <begin position="1"/>
        <end position="340"/>
    </location>
</feature>
<feature type="binding site" evidence="2">
    <location>
        <position position="47"/>
    </location>
    <ligand>
        <name>isopentenyl diphosphate</name>
        <dbReference type="ChEBI" id="CHEBI:128769"/>
    </ligand>
</feature>
<feature type="binding site" evidence="2">
    <location>
        <position position="50"/>
    </location>
    <ligand>
        <name>isopentenyl diphosphate</name>
        <dbReference type="ChEBI" id="CHEBI:128769"/>
    </ligand>
</feature>
<feature type="binding site" evidence="2">
    <location>
        <position position="85"/>
    </location>
    <ligand>
        <name>isopentenyl diphosphate</name>
        <dbReference type="ChEBI" id="CHEBI:128769"/>
    </ligand>
</feature>
<feature type="binding site" evidence="2">
    <location>
        <position position="92"/>
    </location>
    <ligand>
        <name>Mg(2+)</name>
        <dbReference type="ChEBI" id="CHEBI:18420"/>
        <label>1</label>
    </ligand>
</feature>
<feature type="binding site" evidence="2">
    <location>
        <position position="92"/>
    </location>
    <ligand>
        <name>Mg(2+)</name>
        <dbReference type="ChEBI" id="CHEBI:18420"/>
        <label>2</label>
    </ligand>
</feature>
<feature type="binding site" evidence="2">
    <location>
        <position position="96"/>
    </location>
    <ligand>
        <name>Mg(2+)</name>
        <dbReference type="ChEBI" id="CHEBI:18420"/>
        <label>1</label>
    </ligand>
</feature>
<feature type="binding site" evidence="2">
    <location>
        <position position="96"/>
    </location>
    <ligand>
        <name>Mg(2+)</name>
        <dbReference type="ChEBI" id="CHEBI:18420"/>
        <label>2</label>
    </ligand>
</feature>
<feature type="binding site" evidence="4">
    <location>
        <position position="101"/>
    </location>
    <ligand>
        <name>dimethylallyl diphosphate</name>
        <dbReference type="ChEBI" id="CHEBI:57623"/>
    </ligand>
</feature>
<feature type="binding site" evidence="2">
    <location>
        <position position="102"/>
    </location>
    <ligand>
        <name>isopentenyl diphosphate</name>
        <dbReference type="ChEBI" id="CHEBI:128769"/>
    </ligand>
</feature>
<feature type="binding site" evidence="4">
    <location>
        <position position="188"/>
    </location>
    <ligand>
        <name>dimethylallyl diphosphate</name>
        <dbReference type="ChEBI" id="CHEBI:57623"/>
    </ligand>
</feature>
<feature type="binding site" evidence="4">
    <location>
        <position position="189"/>
    </location>
    <ligand>
        <name>dimethylallyl diphosphate</name>
        <dbReference type="ChEBI" id="CHEBI:57623"/>
    </ligand>
</feature>
<feature type="binding site" evidence="4">
    <location>
        <position position="227"/>
    </location>
    <ligand>
        <name>dimethylallyl diphosphate</name>
        <dbReference type="ChEBI" id="CHEBI:57623"/>
    </ligand>
</feature>
<feature type="binding site" evidence="4">
    <location>
        <position position="244"/>
    </location>
    <ligand>
        <name>dimethylallyl diphosphate</name>
        <dbReference type="ChEBI" id="CHEBI:57623"/>
    </ligand>
</feature>
<feature type="binding site" evidence="4">
    <location>
        <position position="253"/>
    </location>
    <ligand>
        <name>dimethylallyl diphosphate</name>
        <dbReference type="ChEBI" id="CHEBI:57623"/>
    </ligand>
</feature>
<feature type="sequence conflict" description="In Ref. 2; KAF4379173." evidence="7" ref="2">
    <original>E</original>
    <variation>D</variation>
    <location>
        <position position="65"/>
    </location>
</feature>
<proteinExistence type="evidence at transcript level"/>
<name>FPPS1_CANSA</name>